<organism>
    <name type="scientific">Homo sapiens</name>
    <name type="common">Human</name>
    <dbReference type="NCBI Taxonomy" id="9606"/>
    <lineage>
        <taxon>Eukaryota</taxon>
        <taxon>Metazoa</taxon>
        <taxon>Chordata</taxon>
        <taxon>Craniata</taxon>
        <taxon>Vertebrata</taxon>
        <taxon>Euteleostomi</taxon>
        <taxon>Mammalia</taxon>
        <taxon>Eutheria</taxon>
        <taxon>Euarchontoglires</taxon>
        <taxon>Primates</taxon>
        <taxon>Haplorrhini</taxon>
        <taxon>Catarrhini</taxon>
        <taxon>Hominidae</taxon>
        <taxon>Homo</taxon>
    </lineage>
</organism>
<accession>A2RUQ5</accession>
<accession>A5PKX0</accession>
<accession>Q6ZTB3</accession>
<name>CQ102_HUMAN</name>
<keyword id="KW-1185">Reference proteome</keyword>
<sequence>MFDFSFPTPASAGTRMGPASCGGRSLHLPQLRFSRVDATAVTDVPFQRMHAPHRAPEVFCSRSSRGAGRGHPTPTPRVRWALAGNQPRCCAQLLSGRGGSGAQLRAGWVRGAAVGNLFILLLGKEDGEEEGTVLSYSSMVHISNITGIVGTTVSRTKPALVLMELTF</sequence>
<reference key="1">
    <citation type="journal article" date="2004" name="Nat. Genet.">
        <title>Complete sequencing and characterization of 21,243 full-length human cDNAs.</title>
        <authorList>
            <person name="Ota T."/>
            <person name="Suzuki Y."/>
            <person name="Nishikawa T."/>
            <person name="Otsuki T."/>
            <person name="Sugiyama T."/>
            <person name="Irie R."/>
            <person name="Wakamatsu A."/>
            <person name="Hayashi K."/>
            <person name="Sato H."/>
            <person name="Nagai K."/>
            <person name="Kimura K."/>
            <person name="Makita H."/>
            <person name="Sekine M."/>
            <person name="Obayashi M."/>
            <person name="Nishi T."/>
            <person name="Shibahara T."/>
            <person name="Tanaka T."/>
            <person name="Ishii S."/>
            <person name="Yamamoto J."/>
            <person name="Saito K."/>
            <person name="Kawai Y."/>
            <person name="Isono Y."/>
            <person name="Nakamura Y."/>
            <person name="Nagahari K."/>
            <person name="Murakami K."/>
            <person name="Yasuda T."/>
            <person name="Iwayanagi T."/>
            <person name="Wagatsuma M."/>
            <person name="Shiratori A."/>
            <person name="Sudo H."/>
            <person name="Hosoiri T."/>
            <person name="Kaku Y."/>
            <person name="Kodaira H."/>
            <person name="Kondo H."/>
            <person name="Sugawara M."/>
            <person name="Takahashi M."/>
            <person name="Kanda K."/>
            <person name="Yokoi T."/>
            <person name="Furuya T."/>
            <person name="Kikkawa E."/>
            <person name="Omura Y."/>
            <person name="Abe K."/>
            <person name="Kamihara K."/>
            <person name="Katsuta N."/>
            <person name="Sato K."/>
            <person name="Tanikawa M."/>
            <person name="Yamazaki M."/>
            <person name="Ninomiya K."/>
            <person name="Ishibashi T."/>
            <person name="Yamashita H."/>
            <person name="Murakawa K."/>
            <person name="Fujimori K."/>
            <person name="Tanai H."/>
            <person name="Kimata M."/>
            <person name="Watanabe M."/>
            <person name="Hiraoka S."/>
            <person name="Chiba Y."/>
            <person name="Ishida S."/>
            <person name="Ono Y."/>
            <person name="Takiguchi S."/>
            <person name="Watanabe S."/>
            <person name="Yosida M."/>
            <person name="Hotuta T."/>
            <person name="Kusano J."/>
            <person name="Kanehori K."/>
            <person name="Takahashi-Fujii A."/>
            <person name="Hara H."/>
            <person name="Tanase T.-O."/>
            <person name="Nomura Y."/>
            <person name="Togiya S."/>
            <person name="Komai F."/>
            <person name="Hara R."/>
            <person name="Takeuchi K."/>
            <person name="Arita M."/>
            <person name="Imose N."/>
            <person name="Musashino K."/>
            <person name="Yuuki H."/>
            <person name="Oshima A."/>
            <person name="Sasaki N."/>
            <person name="Aotsuka S."/>
            <person name="Yoshikawa Y."/>
            <person name="Matsunawa H."/>
            <person name="Ichihara T."/>
            <person name="Shiohata N."/>
            <person name="Sano S."/>
            <person name="Moriya S."/>
            <person name="Momiyama H."/>
            <person name="Satoh N."/>
            <person name="Takami S."/>
            <person name="Terashima Y."/>
            <person name="Suzuki O."/>
            <person name="Nakagawa S."/>
            <person name="Senoh A."/>
            <person name="Mizoguchi H."/>
            <person name="Goto Y."/>
            <person name="Shimizu F."/>
            <person name="Wakebe H."/>
            <person name="Hishigaki H."/>
            <person name="Watanabe T."/>
            <person name="Sugiyama A."/>
            <person name="Takemoto M."/>
            <person name="Kawakami B."/>
            <person name="Yamazaki M."/>
            <person name="Watanabe K."/>
            <person name="Kumagai A."/>
            <person name="Itakura S."/>
            <person name="Fukuzumi Y."/>
            <person name="Fujimori Y."/>
            <person name="Komiyama M."/>
            <person name="Tashiro H."/>
            <person name="Tanigami A."/>
            <person name="Fujiwara T."/>
            <person name="Ono T."/>
            <person name="Yamada K."/>
            <person name="Fujii Y."/>
            <person name="Ozaki K."/>
            <person name="Hirao M."/>
            <person name="Ohmori Y."/>
            <person name="Kawabata A."/>
            <person name="Hikiji T."/>
            <person name="Kobatake N."/>
            <person name="Inagaki H."/>
            <person name="Ikema Y."/>
            <person name="Okamoto S."/>
            <person name="Okitani R."/>
            <person name="Kawakami T."/>
            <person name="Noguchi S."/>
            <person name="Itoh T."/>
            <person name="Shigeta K."/>
            <person name="Senba T."/>
            <person name="Matsumura K."/>
            <person name="Nakajima Y."/>
            <person name="Mizuno T."/>
            <person name="Morinaga M."/>
            <person name="Sasaki M."/>
            <person name="Togashi T."/>
            <person name="Oyama M."/>
            <person name="Hata H."/>
            <person name="Watanabe M."/>
            <person name="Komatsu T."/>
            <person name="Mizushima-Sugano J."/>
            <person name="Satoh T."/>
            <person name="Shirai Y."/>
            <person name="Takahashi Y."/>
            <person name="Nakagawa K."/>
            <person name="Okumura K."/>
            <person name="Nagase T."/>
            <person name="Nomura N."/>
            <person name="Kikuchi H."/>
            <person name="Masuho Y."/>
            <person name="Yamashita R."/>
            <person name="Nakai K."/>
            <person name="Yada T."/>
            <person name="Nakamura Y."/>
            <person name="Ohara O."/>
            <person name="Isogai T."/>
            <person name="Sugano S."/>
        </authorList>
    </citation>
    <scope>NUCLEOTIDE SEQUENCE [LARGE SCALE MRNA]</scope>
    <scope>VARIANTS ARG-98 AND LYS-155</scope>
    <source>
        <tissue>Cerebellum</tissue>
    </source>
</reference>
<reference key="2">
    <citation type="journal article" date="2004" name="Genome Res.">
        <title>The status, quality, and expansion of the NIH full-length cDNA project: the Mammalian Gene Collection (MGC).</title>
        <authorList>
            <consortium name="The MGC Project Team"/>
        </authorList>
    </citation>
    <scope>NUCLEOTIDE SEQUENCE [LARGE SCALE MRNA]</scope>
    <scope>VARIANT LYS-155</scope>
    <source>
        <tissue>Brain</tissue>
    </source>
</reference>
<protein>
    <recommendedName>
        <fullName evidence="4">Uncharacterized protein TMEM132E-DT</fullName>
    </recommendedName>
    <alternativeName>
        <fullName evidence="5">TMEM132E divergent transcript</fullName>
    </alternativeName>
</protein>
<proteinExistence type="evidence at protein level"/>
<comment type="interaction">
    <interactant intactId="EBI-21688145">
        <id>A2RUQ5</id>
    </interactant>
    <interactant intactId="EBI-707554">
        <id>O14530</id>
        <label>TXNDC9</label>
    </interactant>
    <organismsDiffer>false</organismsDiffer>
    <experiments>2</experiments>
</comment>
<feature type="chain" id="PRO_0000348468" description="Uncharacterized protein TMEM132E-DT">
    <location>
        <begin position="1"/>
        <end position="167"/>
    </location>
</feature>
<feature type="region of interest" description="Disordered" evidence="1">
    <location>
        <begin position="1"/>
        <end position="21"/>
    </location>
</feature>
<feature type="sequence variant" id="VAR_046187" description="In dbSNP:rs58529418." evidence="2">
    <original>G</original>
    <variation>R</variation>
    <location>
        <position position="98"/>
    </location>
</feature>
<feature type="sequence variant" id="VAR_046188" description="In dbSNP:rs887230." evidence="2 3">
    <original>R</original>
    <variation>K</variation>
    <location>
        <position position="155"/>
    </location>
</feature>
<feature type="sequence conflict" description="In Ref. 1; BAC86680." evidence="4" ref="1">
    <original>A</original>
    <variation>P</variation>
    <location>
        <position position="112"/>
    </location>
</feature>
<evidence type="ECO:0000256" key="1">
    <source>
        <dbReference type="SAM" id="MobiDB-lite"/>
    </source>
</evidence>
<evidence type="ECO:0000269" key="2">
    <source>
    </source>
</evidence>
<evidence type="ECO:0000269" key="3">
    <source>
    </source>
</evidence>
<evidence type="ECO:0000305" key="4"/>
<evidence type="ECO:0000312" key="5">
    <source>
        <dbReference type="HGNC" id="HGNC:34412"/>
    </source>
</evidence>
<gene>
    <name evidence="5" type="primary">TMEM132E-DT</name>
    <name evidence="5" type="synonym">C17orf102</name>
</gene>
<dbReference type="EMBL" id="AK126768">
    <property type="protein sequence ID" value="BAC86680.1"/>
    <property type="molecule type" value="mRNA"/>
</dbReference>
<dbReference type="EMBL" id="BC133004">
    <property type="protein sequence ID" value="AAI33005.1"/>
    <property type="molecule type" value="mRNA"/>
</dbReference>
<dbReference type="EMBL" id="BC136710">
    <property type="protein sequence ID" value="AAI36711.1"/>
    <property type="molecule type" value="mRNA"/>
</dbReference>
<dbReference type="EMBL" id="BC142651">
    <property type="protein sequence ID" value="AAI42652.1"/>
    <property type="molecule type" value="mRNA"/>
</dbReference>
<dbReference type="RefSeq" id="NP_997337.2">
    <property type="nucleotide sequence ID" value="NM_207454.2"/>
</dbReference>
<dbReference type="BioGRID" id="134651">
    <property type="interactions" value="5"/>
</dbReference>
<dbReference type="IntAct" id="A2RUQ5">
    <property type="interactions" value="2"/>
</dbReference>
<dbReference type="GlyGen" id="A2RUQ5">
    <property type="glycosylation" value="3 sites, 1 O-linked glycan (1 site)"/>
</dbReference>
<dbReference type="iPTMnet" id="A2RUQ5"/>
<dbReference type="PhosphoSitePlus" id="A2RUQ5"/>
<dbReference type="BioMuta" id="HGNC:34412"/>
<dbReference type="jPOST" id="A2RUQ5"/>
<dbReference type="PaxDb" id="9606-ENSP00000350392"/>
<dbReference type="AGR" id="HGNC:34412"/>
<dbReference type="GeneCards" id="TMEM132E-DT"/>
<dbReference type="HGNC" id="HGNC:34412">
    <property type="gene designation" value="TMEM132E-DT"/>
</dbReference>
<dbReference type="neXtProt" id="NX_A2RUQ5"/>
<dbReference type="eggNOG" id="ENOG502TDX5">
    <property type="taxonomic scope" value="Eukaryota"/>
</dbReference>
<dbReference type="InParanoid" id="A2RUQ5"/>
<dbReference type="PAN-GO" id="A2RUQ5">
    <property type="GO annotations" value="0 GO annotations based on evolutionary models"/>
</dbReference>
<dbReference type="PhylomeDB" id="A2RUQ5"/>
<dbReference type="TreeFam" id="TF353629"/>
<dbReference type="PathwayCommons" id="A2RUQ5"/>
<dbReference type="SignaLink" id="A2RUQ5"/>
<dbReference type="BioGRID-ORCS" id="400591">
    <property type="hits" value="9 hits in 1099 CRISPR screens"/>
</dbReference>
<dbReference type="GenomeRNAi" id="400591"/>
<dbReference type="Pharos" id="A2RUQ5">
    <property type="development level" value="Tdark"/>
</dbReference>
<dbReference type="PRO" id="PR:A2RUQ5"/>
<dbReference type="Proteomes" id="UP000005640">
    <property type="component" value="Unplaced"/>
</dbReference>
<dbReference type="RNAct" id="A2RUQ5">
    <property type="molecule type" value="protein"/>
</dbReference>